<dbReference type="EMBL" id="AC008148">
    <property type="protein sequence ID" value="AAD55497.1"/>
    <property type="molecule type" value="Genomic_DNA"/>
</dbReference>
<dbReference type="EMBL" id="CP002684">
    <property type="protein sequence ID" value="AEE35119.1"/>
    <property type="molecule type" value="Genomic_DNA"/>
</dbReference>
<dbReference type="EMBL" id="AF360142">
    <property type="protein sequence ID" value="AAK25852.1"/>
    <property type="molecule type" value="mRNA"/>
</dbReference>
<dbReference type="EMBL" id="AY142624">
    <property type="protein sequence ID" value="AAN13082.1"/>
    <property type="molecule type" value="mRNA"/>
</dbReference>
<dbReference type="EMBL" id="AY086279">
    <property type="protein sequence ID" value="AAM64351.1"/>
    <property type="molecule type" value="mRNA"/>
</dbReference>
<dbReference type="PIR" id="G96732">
    <property type="entry name" value="G96732"/>
</dbReference>
<dbReference type="RefSeq" id="NP_565002.1">
    <property type="nucleotide sequence ID" value="NM_105749.3"/>
</dbReference>
<dbReference type="SMR" id="Q9SSL1"/>
<dbReference type="FunCoup" id="Q9SSL1">
    <property type="interactions" value="22"/>
</dbReference>
<dbReference type="STRING" id="3702.Q9SSL1"/>
<dbReference type="iPTMnet" id="Q9SSL1"/>
<dbReference type="PaxDb" id="3702-AT1G70810.1"/>
<dbReference type="ProteomicsDB" id="239195"/>
<dbReference type="EnsemblPlants" id="AT1G70810.1">
    <property type="protein sequence ID" value="AT1G70810.1"/>
    <property type="gene ID" value="AT1G70810"/>
</dbReference>
<dbReference type="GeneID" id="843418"/>
<dbReference type="Gramene" id="AT1G70810.1">
    <property type="protein sequence ID" value="AT1G70810.1"/>
    <property type="gene ID" value="AT1G70810"/>
</dbReference>
<dbReference type="KEGG" id="ath:AT1G70810"/>
<dbReference type="Araport" id="AT1G70810"/>
<dbReference type="TAIR" id="AT1G70810">
    <property type="gene designation" value="CAR7"/>
</dbReference>
<dbReference type="eggNOG" id="KOG1030">
    <property type="taxonomic scope" value="Eukaryota"/>
</dbReference>
<dbReference type="HOGENOM" id="CLU_106037_0_0_1"/>
<dbReference type="InParanoid" id="Q9SSL1"/>
<dbReference type="OMA" id="FLEVHKM"/>
<dbReference type="PhylomeDB" id="Q9SSL1"/>
<dbReference type="PRO" id="PR:Q9SSL1"/>
<dbReference type="Proteomes" id="UP000006548">
    <property type="component" value="Chromosome 1"/>
</dbReference>
<dbReference type="ExpressionAtlas" id="Q9SSL1">
    <property type="expression patterns" value="baseline and differential"/>
</dbReference>
<dbReference type="GO" id="GO:0005739">
    <property type="term" value="C:mitochondrion"/>
    <property type="evidence" value="ECO:0007005"/>
    <property type="project" value="TAIR"/>
</dbReference>
<dbReference type="GO" id="GO:0005634">
    <property type="term" value="C:nucleus"/>
    <property type="evidence" value="ECO:0000250"/>
    <property type="project" value="UniProtKB"/>
</dbReference>
<dbReference type="GO" id="GO:0005886">
    <property type="term" value="C:plasma membrane"/>
    <property type="evidence" value="ECO:0000250"/>
    <property type="project" value="UniProtKB"/>
</dbReference>
<dbReference type="GO" id="GO:0005096">
    <property type="term" value="F:GTPase activator activity"/>
    <property type="evidence" value="ECO:0000250"/>
    <property type="project" value="UniProtKB"/>
</dbReference>
<dbReference type="GO" id="GO:0046872">
    <property type="term" value="F:metal ion binding"/>
    <property type="evidence" value="ECO:0007669"/>
    <property type="project" value="UniProtKB-KW"/>
</dbReference>
<dbReference type="GO" id="GO:0005543">
    <property type="term" value="F:phospholipid binding"/>
    <property type="evidence" value="ECO:0000250"/>
    <property type="project" value="UniProtKB"/>
</dbReference>
<dbReference type="GO" id="GO:0009738">
    <property type="term" value="P:abscisic acid-activated signaling pathway"/>
    <property type="evidence" value="ECO:0007669"/>
    <property type="project" value="UniProtKB-KW"/>
</dbReference>
<dbReference type="GO" id="GO:0009789">
    <property type="term" value="P:positive regulation of abscisic acid-activated signaling pathway"/>
    <property type="evidence" value="ECO:0000250"/>
    <property type="project" value="UniProtKB"/>
</dbReference>
<dbReference type="GO" id="GO:0043547">
    <property type="term" value="P:positive regulation of GTPase activity"/>
    <property type="evidence" value="ECO:0000250"/>
    <property type="project" value="UniProtKB"/>
</dbReference>
<dbReference type="CDD" id="cd04038">
    <property type="entry name" value="C2_ArfGAP"/>
    <property type="match status" value="1"/>
</dbReference>
<dbReference type="Gene3D" id="2.60.40.150">
    <property type="entry name" value="C2 domain"/>
    <property type="match status" value="1"/>
</dbReference>
<dbReference type="InterPro" id="IPR000008">
    <property type="entry name" value="C2_dom"/>
</dbReference>
<dbReference type="InterPro" id="IPR035892">
    <property type="entry name" value="C2_domain_sf"/>
</dbReference>
<dbReference type="InterPro" id="IPR044562">
    <property type="entry name" value="CAR1-11"/>
</dbReference>
<dbReference type="PANTHER" id="PTHR45933">
    <property type="entry name" value="PROTEIN C2-DOMAIN ABA-RELATED 4"/>
    <property type="match status" value="1"/>
</dbReference>
<dbReference type="PANTHER" id="PTHR45933:SF22">
    <property type="entry name" value="PROTEIN C2-DOMAIN ABA-RELATED 6-RELATED"/>
    <property type="match status" value="1"/>
</dbReference>
<dbReference type="Pfam" id="PF00168">
    <property type="entry name" value="C2"/>
    <property type="match status" value="1"/>
</dbReference>
<dbReference type="SMART" id="SM00239">
    <property type="entry name" value="C2"/>
    <property type="match status" value="1"/>
</dbReference>
<dbReference type="SUPFAM" id="SSF49562">
    <property type="entry name" value="C2 domain (Calcium/lipid-binding domain, CaLB)"/>
    <property type="match status" value="1"/>
</dbReference>
<dbReference type="PROSITE" id="PS50004">
    <property type="entry name" value="C2"/>
    <property type="match status" value="1"/>
</dbReference>
<feature type="chain" id="PRO_0000433317" description="Protein C2-DOMAIN ABA-RELATED 7">
    <location>
        <begin position="1"/>
        <end position="165"/>
    </location>
</feature>
<feature type="domain" description="C2" evidence="3">
    <location>
        <begin position="1"/>
        <end position="106"/>
    </location>
</feature>
<feature type="binding site" evidence="2">
    <location>
        <position position="21"/>
    </location>
    <ligand>
        <name>Ca(2+)</name>
        <dbReference type="ChEBI" id="CHEBI:29108"/>
        <label>1</label>
    </ligand>
</feature>
<feature type="binding site" evidence="2">
    <location>
        <position position="22"/>
    </location>
    <ligand>
        <name>Ca(2+)</name>
        <dbReference type="ChEBI" id="CHEBI:29108"/>
        <label>1</label>
    </ligand>
</feature>
<feature type="binding site" evidence="2">
    <location>
        <position position="22"/>
    </location>
    <ligand>
        <name>Ca(2+)</name>
        <dbReference type="ChEBI" id="CHEBI:29108"/>
        <label>2</label>
    </ligand>
</feature>
<feature type="binding site" evidence="2">
    <location>
        <position position="27"/>
    </location>
    <ligand>
        <name>Ca(2+)</name>
        <dbReference type="ChEBI" id="CHEBI:29108"/>
        <label>2</label>
    </ligand>
</feature>
<feature type="binding site" evidence="2">
    <location>
        <position position="73"/>
    </location>
    <ligand>
        <name>Ca(2+)</name>
        <dbReference type="ChEBI" id="CHEBI:29108"/>
        <label>1</label>
    </ligand>
</feature>
<feature type="binding site" evidence="2">
    <location>
        <position position="73"/>
    </location>
    <ligand>
        <name>Ca(2+)</name>
        <dbReference type="ChEBI" id="CHEBI:29108"/>
        <label>2</label>
    </ligand>
</feature>
<feature type="binding site" evidence="2">
    <location>
        <position position="74"/>
    </location>
    <ligand>
        <name>Ca(2+)</name>
        <dbReference type="ChEBI" id="CHEBI:29108"/>
        <label>2</label>
    </ligand>
</feature>
<feature type="binding site" evidence="2">
    <location>
        <position position="75"/>
    </location>
    <ligand>
        <name>Ca(2+)</name>
        <dbReference type="ChEBI" id="CHEBI:29108"/>
        <label>1</label>
    </ligand>
</feature>
<feature type="binding site" evidence="2">
    <location>
        <position position="75"/>
    </location>
    <ligand>
        <name>Ca(2+)</name>
        <dbReference type="ChEBI" id="CHEBI:29108"/>
        <label>2</label>
    </ligand>
</feature>
<feature type="binding site" evidence="2">
    <location>
        <position position="81"/>
    </location>
    <ligand>
        <name>Ca(2+)</name>
        <dbReference type="ChEBI" id="CHEBI:29108"/>
        <label>1</label>
    </ligand>
</feature>
<feature type="modified residue" description="N-acetylmethionine" evidence="10">
    <location>
        <position position="1"/>
    </location>
</feature>
<feature type="sequence conflict" description="In Ref. 3; AAK25852." evidence="5" ref="3">
    <original>S</original>
    <variation>G</variation>
    <location>
        <position position="25"/>
    </location>
</feature>
<keyword id="KW-0938">Abscisic acid signaling pathway</keyword>
<keyword id="KW-0007">Acetylation</keyword>
<keyword id="KW-0106">Calcium</keyword>
<keyword id="KW-1003">Cell membrane</keyword>
<keyword id="KW-0343">GTPase activation</keyword>
<keyword id="KW-0446">Lipid-binding</keyword>
<keyword id="KW-0472">Membrane</keyword>
<keyword id="KW-0479">Metal-binding</keyword>
<keyword id="KW-0539">Nucleus</keyword>
<keyword id="KW-1185">Reference proteome</keyword>
<organism evidence="9">
    <name type="scientific">Arabidopsis thaliana</name>
    <name type="common">Mouse-ear cress</name>
    <dbReference type="NCBI Taxonomy" id="3702"/>
    <lineage>
        <taxon>Eukaryota</taxon>
        <taxon>Viridiplantae</taxon>
        <taxon>Streptophyta</taxon>
        <taxon>Embryophyta</taxon>
        <taxon>Tracheophyta</taxon>
        <taxon>Spermatophyta</taxon>
        <taxon>Magnoliopsida</taxon>
        <taxon>eudicotyledons</taxon>
        <taxon>Gunneridae</taxon>
        <taxon>Pentapetalae</taxon>
        <taxon>rosids</taxon>
        <taxon>malvids</taxon>
        <taxon>Brassicales</taxon>
        <taxon>Brassicaceae</taxon>
        <taxon>Camelineae</taxon>
        <taxon>Arabidopsis</taxon>
    </lineage>
</organism>
<evidence type="ECO:0000250" key="1">
    <source>
        <dbReference type="UniProtKB" id="Q9FHP6"/>
    </source>
</evidence>
<evidence type="ECO:0000250" key="2">
    <source>
        <dbReference type="UniProtKB" id="Q9LVH4"/>
    </source>
</evidence>
<evidence type="ECO:0000255" key="3">
    <source>
        <dbReference type="PROSITE-ProRule" id="PRU00041"/>
    </source>
</evidence>
<evidence type="ECO:0000303" key="4">
    <source>
    </source>
</evidence>
<evidence type="ECO:0000305" key="5"/>
<evidence type="ECO:0000305" key="6">
    <source>
    </source>
</evidence>
<evidence type="ECO:0000312" key="7">
    <source>
        <dbReference type="Araport" id="AT1G70810"/>
    </source>
</evidence>
<evidence type="ECO:0000312" key="8">
    <source>
        <dbReference type="EMBL" id="AAD55497.1"/>
    </source>
</evidence>
<evidence type="ECO:0000312" key="9">
    <source>
        <dbReference type="Proteomes" id="UP000006548"/>
    </source>
</evidence>
<evidence type="ECO:0007744" key="10">
    <source>
    </source>
</evidence>
<gene>
    <name evidence="4" type="primary">CAR7</name>
    <name evidence="7" type="ordered locus">At1g70810</name>
    <name evidence="8" type="ORF">F15H11.6</name>
</gene>
<accession>Q9SSL1</accession>
<accession>Q9C5M6</accession>
<comment type="function">
    <text evidence="1 2">Stimulates the GTPase/ATPase activities of Obg-like ATPases (By similarity). Mediates the transient calcium-dependent interaction of PYR/PYL/RCAR abscisic acid (ABA) receptors with the plasma membrane and thus regulates ABA sensitivity (By similarity).</text>
</comment>
<comment type="subunit">
    <text evidence="1">Binds to PYR/PYL/RCAR abscisic acid intracellular receptors in an ABA-independent manner, both at the plasma membrane and in the nucleus.</text>
</comment>
<comment type="subcellular location">
    <subcellularLocation>
        <location evidence="1">Cell membrane</location>
    </subcellularLocation>
    <subcellularLocation>
        <location evidence="1">Nucleus</location>
    </subcellularLocation>
</comment>
<comment type="similarity">
    <text evidence="6">Belongs to the plant CAR protein family.</text>
</comment>
<protein>
    <recommendedName>
        <fullName evidence="4">Protein C2-DOMAIN ABA-RELATED 7</fullName>
    </recommendedName>
</protein>
<proteinExistence type="evidence at protein level"/>
<reference key="1">
    <citation type="journal article" date="2000" name="Nature">
        <title>Sequence and analysis of chromosome 1 of the plant Arabidopsis thaliana.</title>
        <authorList>
            <person name="Theologis A."/>
            <person name="Ecker J.R."/>
            <person name="Palm C.J."/>
            <person name="Federspiel N.A."/>
            <person name="Kaul S."/>
            <person name="White O."/>
            <person name="Alonso J."/>
            <person name="Altafi H."/>
            <person name="Araujo R."/>
            <person name="Bowman C.L."/>
            <person name="Brooks S.Y."/>
            <person name="Buehler E."/>
            <person name="Chan A."/>
            <person name="Chao Q."/>
            <person name="Chen H."/>
            <person name="Cheuk R.F."/>
            <person name="Chin C.W."/>
            <person name="Chung M.K."/>
            <person name="Conn L."/>
            <person name="Conway A.B."/>
            <person name="Conway A.R."/>
            <person name="Creasy T.H."/>
            <person name="Dewar K."/>
            <person name="Dunn P."/>
            <person name="Etgu P."/>
            <person name="Feldblyum T.V."/>
            <person name="Feng J.-D."/>
            <person name="Fong B."/>
            <person name="Fujii C.Y."/>
            <person name="Gill J.E."/>
            <person name="Goldsmith A.D."/>
            <person name="Haas B."/>
            <person name="Hansen N.F."/>
            <person name="Hughes B."/>
            <person name="Huizar L."/>
            <person name="Hunter J.L."/>
            <person name="Jenkins J."/>
            <person name="Johnson-Hopson C."/>
            <person name="Khan S."/>
            <person name="Khaykin E."/>
            <person name="Kim C.J."/>
            <person name="Koo H.L."/>
            <person name="Kremenetskaia I."/>
            <person name="Kurtz D.B."/>
            <person name="Kwan A."/>
            <person name="Lam B."/>
            <person name="Langin-Hooper S."/>
            <person name="Lee A."/>
            <person name="Lee J.M."/>
            <person name="Lenz C.A."/>
            <person name="Li J.H."/>
            <person name="Li Y.-P."/>
            <person name="Lin X."/>
            <person name="Liu S.X."/>
            <person name="Liu Z.A."/>
            <person name="Luros J.S."/>
            <person name="Maiti R."/>
            <person name="Marziali A."/>
            <person name="Militscher J."/>
            <person name="Miranda M."/>
            <person name="Nguyen M."/>
            <person name="Nierman W.C."/>
            <person name="Osborne B.I."/>
            <person name="Pai G."/>
            <person name="Peterson J."/>
            <person name="Pham P.K."/>
            <person name="Rizzo M."/>
            <person name="Rooney T."/>
            <person name="Rowley D."/>
            <person name="Sakano H."/>
            <person name="Salzberg S.L."/>
            <person name="Schwartz J.R."/>
            <person name="Shinn P."/>
            <person name="Southwick A.M."/>
            <person name="Sun H."/>
            <person name="Tallon L.J."/>
            <person name="Tambunga G."/>
            <person name="Toriumi M.J."/>
            <person name="Town C.D."/>
            <person name="Utterback T."/>
            <person name="Van Aken S."/>
            <person name="Vaysberg M."/>
            <person name="Vysotskaia V.S."/>
            <person name="Walker M."/>
            <person name="Wu D."/>
            <person name="Yu G."/>
            <person name="Fraser C.M."/>
            <person name="Venter J.C."/>
            <person name="Davis R.W."/>
        </authorList>
    </citation>
    <scope>NUCLEOTIDE SEQUENCE [LARGE SCALE GENOMIC DNA]</scope>
    <source>
        <strain>cv. Columbia</strain>
    </source>
</reference>
<reference key="2">
    <citation type="journal article" date="2017" name="Plant J.">
        <title>Araport11: a complete reannotation of the Arabidopsis thaliana reference genome.</title>
        <authorList>
            <person name="Cheng C.Y."/>
            <person name="Krishnakumar V."/>
            <person name="Chan A.P."/>
            <person name="Thibaud-Nissen F."/>
            <person name="Schobel S."/>
            <person name="Town C.D."/>
        </authorList>
    </citation>
    <scope>GENOME REANNOTATION</scope>
    <source>
        <strain>cv. Columbia</strain>
    </source>
</reference>
<reference key="3">
    <citation type="journal article" date="2003" name="Science">
        <title>Empirical analysis of transcriptional activity in the Arabidopsis genome.</title>
        <authorList>
            <person name="Yamada K."/>
            <person name="Lim J."/>
            <person name="Dale J.M."/>
            <person name="Chen H."/>
            <person name="Shinn P."/>
            <person name="Palm C.J."/>
            <person name="Southwick A.M."/>
            <person name="Wu H.C."/>
            <person name="Kim C.J."/>
            <person name="Nguyen M."/>
            <person name="Pham P.K."/>
            <person name="Cheuk R.F."/>
            <person name="Karlin-Newmann G."/>
            <person name="Liu S.X."/>
            <person name="Lam B."/>
            <person name="Sakano H."/>
            <person name="Wu T."/>
            <person name="Yu G."/>
            <person name="Miranda M."/>
            <person name="Quach H.L."/>
            <person name="Tripp M."/>
            <person name="Chang C.H."/>
            <person name="Lee J.M."/>
            <person name="Toriumi M.J."/>
            <person name="Chan M.M."/>
            <person name="Tang C.C."/>
            <person name="Onodera C.S."/>
            <person name="Deng J.M."/>
            <person name="Akiyama K."/>
            <person name="Ansari Y."/>
            <person name="Arakawa T."/>
            <person name="Banh J."/>
            <person name="Banno F."/>
            <person name="Bowser L."/>
            <person name="Brooks S.Y."/>
            <person name="Carninci P."/>
            <person name="Chao Q."/>
            <person name="Choy N."/>
            <person name="Enju A."/>
            <person name="Goldsmith A.D."/>
            <person name="Gurjal M."/>
            <person name="Hansen N.F."/>
            <person name="Hayashizaki Y."/>
            <person name="Johnson-Hopson C."/>
            <person name="Hsuan V.W."/>
            <person name="Iida K."/>
            <person name="Karnes M."/>
            <person name="Khan S."/>
            <person name="Koesema E."/>
            <person name="Ishida J."/>
            <person name="Jiang P.X."/>
            <person name="Jones T."/>
            <person name="Kawai J."/>
            <person name="Kamiya A."/>
            <person name="Meyers C."/>
            <person name="Nakajima M."/>
            <person name="Narusaka M."/>
            <person name="Seki M."/>
            <person name="Sakurai T."/>
            <person name="Satou M."/>
            <person name="Tamse R."/>
            <person name="Vaysberg M."/>
            <person name="Wallender E.K."/>
            <person name="Wong C."/>
            <person name="Yamamura Y."/>
            <person name="Yuan S."/>
            <person name="Shinozaki K."/>
            <person name="Davis R.W."/>
            <person name="Theologis A."/>
            <person name="Ecker J.R."/>
        </authorList>
    </citation>
    <scope>NUCLEOTIDE SEQUENCE [LARGE SCALE MRNA]</scope>
    <source>
        <strain>cv. Columbia</strain>
    </source>
</reference>
<reference key="4">
    <citation type="submission" date="2002-03" db="EMBL/GenBank/DDBJ databases">
        <title>Full-length cDNA from Arabidopsis thaliana.</title>
        <authorList>
            <person name="Brover V.V."/>
            <person name="Troukhan M.E."/>
            <person name="Alexandrov N.A."/>
            <person name="Lu Y.-P."/>
            <person name="Flavell R.B."/>
            <person name="Feldmann K.A."/>
        </authorList>
    </citation>
    <scope>NUCLEOTIDE SEQUENCE [LARGE SCALE MRNA]</scope>
</reference>
<reference key="5">
    <citation type="journal article" date="2012" name="Mol. Cell. Proteomics">
        <title>Comparative large-scale characterisation of plant vs. mammal proteins reveals similar and idiosyncratic N-alpha acetylation features.</title>
        <authorList>
            <person name="Bienvenut W.V."/>
            <person name="Sumpton D."/>
            <person name="Martinez A."/>
            <person name="Lilla S."/>
            <person name="Espagne C."/>
            <person name="Meinnel T."/>
            <person name="Giglione C."/>
        </authorList>
    </citation>
    <scope>ACETYLATION [LARGE SCALE ANALYSIS] AT MET-1</scope>
    <scope>IDENTIFICATION BY MASS SPECTROMETRY [LARGE SCALE ANALYSIS]</scope>
</reference>
<reference key="6">
    <citation type="journal article" date="2014" name="Plant Cell">
        <title>C2-domain abscisic acid-related proteins mediate the interaction of PYR/PYL/RCAR abscisic acid receptors with the plasma membrane and regulate abscisic acid sensitivity in Arabidopsis.</title>
        <authorList>
            <person name="Rodriguez L."/>
            <person name="Gonzalez-Guzman M."/>
            <person name="Diaz M."/>
            <person name="Rodrigues A."/>
            <person name="Izquierdo-Garcia A.C."/>
            <person name="Peirats-Llobet M."/>
            <person name="Fernandez M.A."/>
            <person name="Antoni R."/>
            <person name="Fernandez D."/>
            <person name="Marquez J.A."/>
            <person name="Mulet J.M."/>
            <person name="Albert A."/>
            <person name="Rodriguez P.L."/>
        </authorList>
    </citation>
    <scope>GENE FAMILY</scope>
    <scope>NOMENCLATURE</scope>
</reference>
<sequence>MEELVGLLRIRVKRGINLAQRDTLSSDPFVVITMGSQKLKTRVVENNCNPEWNEELTLALRHPDEPVNLIVYDKDTFTSHDKMGDAKIDIKPFLEVHKMGLQELPDGTEIKRVVPNRENCLAEASSIVSNNGKIVQNMILLLRNVECGEVEIQLEWIDIPGSRGL</sequence>
<name>CAR7_ARATH</name>